<proteinExistence type="evidence at transcript level"/>
<comment type="function">
    <text evidence="1">Participates in various redox reactions through the reversible oxidation of the active center dithiol to a disulfide. The H form is known to activate a number of cytosolic enzymes (By similarity).</text>
</comment>
<comment type="subcellular location">
    <subcellularLocation>
        <location evidence="1">Cytoplasm</location>
    </subcellularLocation>
</comment>
<comment type="similarity">
    <text evidence="3">Belongs to the thioredoxin family. Plant H-type subfamily.</text>
</comment>
<reference key="1">
    <citation type="journal article" date="1991" name="Plant Mol. Biol.">
        <title>Nucleotide sequence of a cDNA encoding a tobacco thioredoxin.</title>
        <authorList>
            <person name="Marty I."/>
            <person name="Meyer Y."/>
        </authorList>
    </citation>
    <scope>NUCLEOTIDE SEQUENCE [MRNA]</scope>
    <source>
        <strain>cv. White Burley</strain>
    </source>
</reference>
<feature type="chain" id="PRO_0000120061" description="Thioredoxin H-type 1">
    <location>
        <begin position="1"/>
        <end position="126"/>
    </location>
</feature>
<feature type="domain" description="Thioredoxin" evidence="2">
    <location>
        <begin position="2"/>
        <end position="120"/>
    </location>
</feature>
<feature type="active site" description="Nucleophile" evidence="1">
    <location>
        <position position="46"/>
    </location>
</feature>
<feature type="active site" description="Nucleophile" evidence="1">
    <location>
        <position position="49"/>
    </location>
</feature>
<feature type="site" description="Deprotonates C-terminal active site Cys" evidence="1">
    <location>
        <position position="40"/>
    </location>
</feature>
<feature type="site" description="Contributes to redox potential value" evidence="1">
    <location>
        <position position="47"/>
    </location>
</feature>
<feature type="site" description="Contributes to redox potential value" evidence="1">
    <location>
        <position position="48"/>
    </location>
</feature>
<feature type="disulfide bond" description="Redox-active" evidence="2">
    <location>
        <begin position="46"/>
        <end position="49"/>
    </location>
</feature>
<organism>
    <name type="scientific">Nicotiana tabacum</name>
    <name type="common">Common tobacco</name>
    <dbReference type="NCBI Taxonomy" id="4097"/>
    <lineage>
        <taxon>Eukaryota</taxon>
        <taxon>Viridiplantae</taxon>
        <taxon>Streptophyta</taxon>
        <taxon>Embryophyta</taxon>
        <taxon>Tracheophyta</taxon>
        <taxon>Spermatophyta</taxon>
        <taxon>Magnoliopsida</taxon>
        <taxon>eudicotyledons</taxon>
        <taxon>Gunneridae</taxon>
        <taxon>Pentapetalae</taxon>
        <taxon>asterids</taxon>
        <taxon>lamiids</taxon>
        <taxon>Solanales</taxon>
        <taxon>Solanaceae</taxon>
        <taxon>Nicotianoideae</taxon>
        <taxon>Nicotianeae</taxon>
        <taxon>Nicotiana</taxon>
    </lineage>
</organism>
<dbReference type="EMBL" id="X58527">
    <property type="protein sequence ID" value="CAA41415.1"/>
    <property type="molecule type" value="mRNA"/>
</dbReference>
<dbReference type="PIR" id="S16590">
    <property type="entry name" value="S16590"/>
</dbReference>
<dbReference type="RefSeq" id="NP_001412677.1">
    <property type="nucleotide sequence ID" value="NM_001425748.1"/>
</dbReference>
<dbReference type="RefSeq" id="XP_016435914.1">
    <property type="nucleotide sequence ID" value="XM_016580428.1"/>
</dbReference>
<dbReference type="SMR" id="P29449"/>
<dbReference type="STRING" id="4097.P29449"/>
<dbReference type="PaxDb" id="4097-P29449"/>
<dbReference type="ProMEX" id="P29449"/>
<dbReference type="GeneID" id="107762104"/>
<dbReference type="KEGG" id="nta:107762104"/>
<dbReference type="OMA" id="HIHYVTD"/>
<dbReference type="OrthoDB" id="10263751at2759"/>
<dbReference type="PhylomeDB" id="P29449"/>
<dbReference type="Proteomes" id="UP000084051">
    <property type="component" value="Unplaced"/>
</dbReference>
<dbReference type="GO" id="GO:0005737">
    <property type="term" value="C:cytoplasm"/>
    <property type="evidence" value="ECO:0007669"/>
    <property type="project" value="UniProtKB-SubCell"/>
</dbReference>
<dbReference type="GO" id="GO:0015035">
    <property type="term" value="F:protein-disulfide reductase activity"/>
    <property type="evidence" value="ECO:0007669"/>
    <property type="project" value="InterPro"/>
</dbReference>
<dbReference type="CDD" id="cd02947">
    <property type="entry name" value="TRX_family"/>
    <property type="match status" value="1"/>
</dbReference>
<dbReference type="FunFam" id="3.40.30.10:FF:000104">
    <property type="entry name" value="Thioredoxin"/>
    <property type="match status" value="1"/>
</dbReference>
<dbReference type="Gene3D" id="3.40.30.10">
    <property type="entry name" value="Glutaredoxin"/>
    <property type="match status" value="1"/>
</dbReference>
<dbReference type="InterPro" id="IPR005746">
    <property type="entry name" value="Thioredoxin"/>
</dbReference>
<dbReference type="InterPro" id="IPR036249">
    <property type="entry name" value="Thioredoxin-like_sf"/>
</dbReference>
<dbReference type="InterPro" id="IPR017937">
    <property type="entry name" value="Thioredoxin_CS"/>
</dbReference>
<dbReference type="InterPro" id="IPR013766">
    <property type="entry name" value="Thioredoxin_domain"/>
</dbReference>
<dbReference type="InterPro" id="IPR050620">
    <property type="entry name" value="Thioredoxin_H-type-like"/>
</dbReference>
<dbReference type="NCBIfam" id="TIGR01068">
    <property type="entry name" value="thioredoxin"/>
    <property type="match status" value="1"/>
</dbReference>
<dbReference type="PANTHER" id="PTHR10438">
    <property type="entry name" value="THIOREDOXIN"/>
    <property type="match status" value="1"/>
</dbReference>
<dbReference type="PANTHER" id="PTHR10438:SF444">
    <property type="entry name" value="THIOREDOXIN H-TYPE 1"/>
    <property type="match status" value="1"/>
</dbReference>
<dbReference type="Pfam" id="PF00085">
    <property type="entry name" value="Thioredoxin"/>
    <property type="match status" value="1"/>
</dbReference>
<dbReference type="PRINTS" id="PR00421">
    <property type="entry name" value="THIOREDOXIN"/>
</dbReference>
<dbReference type="SUPFAM" id="SSF52833">
    <property type="entry name" value="Thioredoxin-like"/>
    <property type="match status" value="1"/>
</dbReference>
<dbReference type="PROSITE" id="PS00194">
    <property type="entry name" value="THIOREDOXIN_1"/>
    <property type="match status" value="1"/>
</dbReference>
<dbReference type="PROSITE" id="PS51352">
    <property type="entry name" value="THIOREDOXIN_2"/>
    <property type="match status" value="1"/>
</dbReference>
<evidence type="ECO:0000250" key="1"/>
<evidence type="ECO:0000255" key="2">
    <source>
        <dbReference type="PROSITE-ProRule" id="PRU00691"/>
    </source>
</evidence>
<evidence type="ECO:0000305" key="3"/>
<name>TRXH1_TOBAC</name>
<keyword id="KW-0963">Cytoplasm</keyword>
<keyword id="KW-1015">Disulfide bond</keyword>
<keyword id="KW-0249">Electron transport</keyword>
<keyword id="KW-0676">Redox-active center</keyword>
<keyword id="KW-1185">Reference proteome</keyword>
<keyword id="KW-0813">Transport</keyword>
<protein>
    <recommendedName>
        <fullName>Thioredoxin H-type 1</fullName>
        <shortName>Trx-H1</shortName>
    </recommendedName>
</protein>
<sequence>MAANDATSSEEGQVFGCHKVEEWNEYFKKGVETKKLVVVDFTASWCGPCRFIAPILADIAKKMPHVIFLKVDVDELKTVSAEWSVEAMPTFVFIKDGKEVDRVVGAKKEELQQTIVKHAAPATVTA</sequence>
<accession>P29449</accession>